<proteinExistence type="predicted"/>
<accession>P41049</accession>
<name>EFH52_TRYCR</name>
<organism>
    <name type="scientific">Trypanosoma cruzi</name>
    <dbReference type="NCBI Taxonomy" id="5693"/>
    <lineage>
        <taxon>Eukaryota</taxon>
        <taxon>Discoba</taxon>
        <taxon>Euglenozoa</taxon>
        <taxon>Kinetoplastea</taxon>
        <taxon>Metakinetoplastina</taxon>
        <taxon>Trypanosomatida</taxon>
        <taxon>Trypanosomatidae</taxon>
        <taxon>Trypanosoma</taxon>
        <taxon>Schizotrypanum</taxon>
    </lineage>
</organism>
<dbReference type="EMBL" id="L01584">
    <property type="protein sequence ID" value="AAA30172.1"/>
    <property type="molecule type" value="Genomic_DNA"/>
</dbReference>
<dbReference type="SMR" id="P41049"/>
<dbReference type="VEuPathDB" id="TriTrypDB:BCY84_04471"/>
<dbReference type="VEuPathDB" id="TriTrypDB:C3747_16g220"/>
<dbReference type="VEuPathDB" id="TriTrypDB:C4B63_138g28"/>
<dbReference type="VEuPathDB" id="TriTrypDB:ECC02_012808"/>
<dbReference type="VEuPathDB" id="TriTrypDB:TcBrA4_0110100"/>
<dbReference type="VEuPathDB" id="TriTrypDB:TcCL_NonESM05353"/>
<dbReference type="VEuPathDB" id="TriTrypDB:TcCLB.506391.30"/>
<dbReference type="VEuPathDB" id="TriTrypDB:TcCLB.507483.20"/>
<dbReference type="VEuPathDB" id="TriTrypDB:TcG_06156"/>
<dbReference type="VEuPathDB" id="TriTrypDB:TCSYLVIO_006560"/>
<dbReference type="VEuPathDB" id="TriTrypDB:TcYC6_0037190"/>
<dbReference type="GO" id="GO:0016460">
    <property type="term" value="C:myosin II complex"/>
    <property type="evidence" value="ECO:0007669"/>
    <property type="project" value="TreeGrafter"/>
</dbReference>
<dbReference type="GO" id="GO:0005509">
    <property type="term" value="F:calcium ion binding"/>
    <property type="evidence" value="ECO:0007669"/>
    <property type="project" value="InterPro"/>
</dbReference>
<dbReference type="FunFam" id="1.10.238.10:FF:000001">
    <property type="entry name" value="Calmodulin 1"/>
    <property type="match status" value="1"/>
</dbReference>
<dbReference type="Gene3D" id="1.10.238.10">
    <property type="entry name" value="EF-hand"/>
    <property type="match status" value="1"/>
</dbReference>
<dbReference type="InterPro" id="IPR050230">
    <property type="entry name" value="CALM/Myosin/TropC-like"/>
</dbReference>
<dbReference type="InterPro" id="IPR011992">
    <property type="entry name" value="EF-hand-dom_pair"/>
</dbReference>
<dbReference type="InterPro" id="IPR002048">
    <property type="entry name" value="EF_hand_dom"/>
</dbReference>
<dbReference type="PANTHER" id="PTHR23048:SF0">
    <property type="entry name" value="CALMODULIN LIKE 3"/>
    <property type="match status" value="1"/>
</dbReference>
<dbReference type="PANTHER" id="PTHR23048">
    <property type="entry name" value="MYOSIN LIGHT CHAIN 1, 3"/>
    <property type="match status" value="1"/>
</dbReference>
<dbReference type="SUPFAM" id="SSF47473">
    <property type="entry name" value="EF-hand"/>
    <property type="match status" value="1"/>
</dbReference>
<dbReference type="PROSITE" id="PS50222">
    <property type="entry name" value="EF_HAND_2"/>
    <property type="match status" value="2"/>
</dbReference>
<feature type="chain" id="PRO_0000073837" description="EF-hand protein 5 variant 2">
    <location>
        <begin position="1"/>
        <end position="208"/>
    </location>
</feature>
<feature type="domain" description="EF-hand 1" evidence="3">
    <location>
        <begin position="64"/>
        <end position="98"/>
    </location>
</feature>
<feature type="domain" description="EF-hand 2" evidence="3">
    <location>
        <begin position="99"/>
        <end position="134"/>
    </location>
</feature>
<feature type="domain" description="EF-hand 3" evidence="1">
    <location>
        <begin position="135"/>
        <end position="170"/>
    </location>
</feature>
<feature type="domain" description="EF-hand 4" evidence="3">
    <location>
        <begin position="171"/>
        <end position="206"/>
    </location>
</feature>
<feature type="region of interest" description="Disordered" evidence="2">
    <location>
        <begin position="1"/>
        <end position="35"/>
    </location>
</feature>
<feature type="binding site" evidence="3">
    <location>
        <position position="118"/>
    </location>
    <ligand>
        <name>Ca(2+)</name>
        <dbReference type="ChEBI" id="CHEBI:29108"/>
        <label>1</label>
    </ligand>
</feature>
<feature type="binding site" evidence="3">
    <location>
        <position position="123"/>
    </location>
    <ligand>
        <name>Ca(2+)</name>
        <dbReference type="ChEBI" id="CHEBI:29108"/>
        <label>1</label>
    </ligand>
</feature>
<feature type="binding site" evidence="3">
    <location>
        <position position="148"/>
    </location>
    <ligand>
        <name>Ca(2+)</name>
        <dbReference type="ChEBI" id="CHEBI:29108"/>
        <label>2</label>
    </ligand>
</feature>
<feature type="binding site" evidence="3">
    <location>
        <position position="152"/>
    </location>
    <ligand>
        <name>Ca(2+)</name>
        <dbReference type="ChEBI" id="CHEBI:29108"/>
        <label>2</label>
    </ligand>
</feature>
<feature type="binding site" evidence="3">
    <location>
        <position position="154"/>
    </location>
    <ligand>
        <name>Ca(2+)</name>
        <dbReference type="ChEBI" id="CHEBI:29108"/>
        <label>2</label>
    </ligand>
</feature>
<comment type="domain">
    <text>This protein has four EF-hand domains, two of which may be functional calcium-binding sites.</text>
</comment>
<evidence type="ECO:0000255" key="1">
    <source>
        <dbReference type="PROSITE-ProRule" id="PRU00448"/>
    </source>
</evidence>
<evidence type="ECO:0000256" key="2">
    <source>
        <dbReference type="SAM" id="MobiDB-lite"/>
    </source>
</evidence>
<evidence type="ECO:0000305" key="3"/>
<sequence>MQARGTVKVQGDANVDGKMSTGQHPHHQHLNSTQANATTTALEYRAMNRPLYRGPISHNIISEMAEGFYVLSGGYKKLFIPSKDVYALMQNVGMHLTEEEFHDALRVIGQSEPQNADELSFSDFLLLMTREVDDTMADELRSAFFHYDKHKTGYVTRKQFTELFATLAERSTPEELEELLAVAEVDETDDKIDYNRFVNELTSRVNCM</sequence>
<keyword id="KW-0106">Calcium</keyword>
<keyword id="KW-0479">Metal-binding</keyword>
<keyword id="KW-0677">Repeat</keyword>
<protein>
    <recommendedName>
        <fullName>EF-hand protein 5 variant 2</fullName>
        <shortName>EFH5</shortName>
    </recommendedName>
    <alternativeName>
        <fullName>Calmodulin-ubiquitin-associated protein CUB2.8</fullName>
    </alternativeName>
</protein>
<reference key="1">
    <citation type="journal article" date="1993" name="Mol. Biochem. Parasitol.">
        <title>The calmodulin-ubiquitin associated genes of Trypanosoma cruzi: their identification and transcription.</title>
        <authorList>
            <person name="Ajioka J."/>
            <person name="Swindle J.T."/>
        </authorList>
    </citation>
    <scope>NUCLEOTIDE SEQUENCE [GENOMIC DNA]</scope>
</reference>